<accession>Q2H8D5</accession>
<gene>
    <name type="primary">SET9</name>
    <name type="ORF">CHGG_03519</name>
</gene>
<dbReference type="EC" id="2.1.1.372" evidence="2"/>
<dbReference type="EMBL" id="CH408030">
    <property type="protein sequence ID" value="EAQ91584.1"/>
    <property type="molecule type" value="Genomic_DNA"/>
</dbReference>
<dbReference type="RefSeq" id="XP_001230035.1">
    <property type="nucleotide sequence ID" value="XM_001230034.1"/>
</dbReference>
<dbReference type="SMR" id="Q2H8D5"/>
<dbReference type="STRING" id="306901.Q2H8D5"/>
<dbReference type="GeneID" id="4388557"/>
<dbReference type="VEuPathDB" id="FungiDB:CHGG_03519"/>
<dbReference type="eggNOG" id="KOG2589">
    <property type="taxonomic scope" value="Eukaryota"/>
</dbReference>
<dbReference type="HOGENOM" id="CLU_013724_0_0_1"/>
<dbReference type="InParanoid" id="Q2H8D5"/>
<dbReference type="OMA" id="FANHDCG"/>
<dbReference type="OrthoDB" id="6627536at2759"/>
<dbReference type="Proteomes" id="UP000001056">
    <property type="component" value="Unassembled WGS sequence"/>
</dbReference>
<dbReference type="GO" id="GO:0005694">
    <property type="term" value="C:chromosome"/>
    <property type="evidence" value="ECO:0007669"/>
    <property type="project" value="UniProtKB-SubCell"/>
</dbReference>
<dbReference type="GO" id="GO:0005634">
    <property type="term" value="C:nucleus"/>
    <property type="evidence" value="ECO:0007669"/>
    <property type="project" value="UniProtKB-SubCell"/>
</dbReference>
<dbReference type="GO" id="GO:0140943">
    <property type="term" value="F:histone H4K20 trimethyltransferase activity"/>
    <property type="evidence" value="ECO:0007669"/>
    <property type="project" value="UniProtKB-EC"/>
</dbReference>
<dbReference type="GO" id="GO:0032259">
    <property type="term" value="P:methylation"/>
    <property type="evidence" value="ECO:0007669"/>
    <property type="project" value="UniProtKB-KW"/>
</dbReference>
<dbReference type="CDD" id="cd10524">
    <property type="entry name" value="SET_Suv4-20-like"/>
    <property type="match status" value="1"/>
</dbReference>
<dbReference type="Gene3D" id="1.10.10.1700">
    <property type="entry name" value="Histone-lysine N-methyltransferase"/>
    <property type="match status" value="1"/>
</dbReference>
<dbReference type="Gene3D" id="2.170.270.10">
    <property type="entry name" value="SET domain"/>
    <property type="match status" value="1"/>
</dbReference>
<dbReference type="InterPro" id="IPR041938">
    <property type="entry name" value="Hist-Lys_N-MTase_N"/>
</dbReference>
<dbReference type="InterPro" id="IPR025783">
    <property type="entry name" value="Set9_fungi"/>
</dbReference>
<dbReference type="InterPro" id="IPR001214">
    <property type="entry name" value="SET_dom"/>
</dbReference>
<dbReference type="InterPro" id="IPR046341">
    <property type="entry name" value="SET_dom_sf"/>
</dbReference>
<dbReference type="InterPro" id="IPR039977">
    <property type="entry name" value="Suv4-20/Set9"/>
</dbReference>
<dbReference type="PANTHER" id="PTHR12977:SF4">
    <property type="entry name" value="HISTONE-LYSINE N-METHYLTRANSFERASE KMT5B"/>
    <property type="match status" value="1"/>
</dbReference>
<dbReference type="PANTHER" id="PTHR12977">
    <property type="entry name" value="SUPPRESSOR OF VARIEGATION 4-20-RELATED"/>
    <property type="match status" value="1"/>
</dbReference>
<dbReference type="Pfam" id="PF00856">
    <property type="entry name" value="SET"/>
    <property type="match status" value="1"/>
</dbReference>
<dbReference type="SUPFAM" id="SSF82199">
    <property type="entry name" value="SET domain"/>
    <property type="match status" value="1"/>
</dbReference>
<dbReference type="PROSITE" id="PS51567">
    <property type="entry name" value="SAM_MT43_SUVAR420_1"/>
    <property type="match status" value="1"/>
</dbReference>
<dbReference type="PROSITE" id="PS50280">
    <property type="entry name" value="SET"/>
    <property type="match status" value="1"/>
</dbReference>
<name>SET9_CHAGB</name>
<reference key="1">
    <citation type="journal article" date="2015" name="Genome Announc.">
        <title>Draft genome sequence of the cellulolytic fungus Chaetomium globosum.</title>
        <authorList>
            <person name="Cuomo C.A."/>
            <person name="Untereiner W.A."/>
            <person name="Ma L.-J."/>
            <person name="Grabherr M."/>
            <person name="Birren B.W."/>
        </authorList>
    </citation>
    <scope>NUCLEOTIDE SEQUENCE [LARGE SCALE GENOMIC DNA]</scope>
    <source>
        <strain>ATCC 6205 / CBS 148.51 / DSM 1962 / NBRC 6347 / NRRL 1970</strain>
    </source>
</reference>
<sequence>MPRAPTSAIKKQPLTFAQLAAYDDILTDALIDHVYYWTAIPKNRPLYHPSRGIREEEITKIIQTHLIVDPDLAIAEEKLLATDGLRKFHNSLRTDKEKEDFKAHLRRYISIYLPDCPFEVNATNRFTIDSYEASITARRPIRRNEAIKYLAGTQVTVTPEEEAQLALRKKDFSLVVSSRSKLTSLFMGPARFANHDCAANARLVTRGSAGIEIFACRDIGLGEEITVTYSESYFGENNCDCLCQTCEDNVANGWKPKDGTVPVHRSIEESVLGDDQGYSLRRRRRERSVSVAGSRTSSVTPDIRPRIFKTAKNRAMASDRASTTDSDGIDVVAMAVAAPKRNFDTTALSSPPLTPAKRQKPNHYDVVPLPLGLDVSRDSSASGPVDSLIATEDEKSTATQATTPEFEEPKPPSMREKPLLSPEMSPMKEGATPVGALNGERDEPTETGAPLSVLPTTETDLPEETLDIAATTPSLFPSSECSMTANDLPEHITPVSEPPRLTQEGKSVARQDSQETIIEESLAVPNSAPSQIQEAENNAQQGAETPVLGASSLTAEPHNEVAPVISAVSTKKKKRRVSEKPAPEPVRKQRVPGDYTLTPLLLAQPETAWIHCTNCNTAFVQSDAYYTRANCSRCERHSKLYGYVWPKTAPAGKNDREERVLDHRLINRFLHPDDEAIIRGRKPWRERLGQSSSSLAPSEERGRQRESGTPQGTPGDNYRRSGRARRASAKAMAQ</sequence>
<evidence type="ECO:0000250" key="1"/>
<evidence type="ECO:0000250" key="2">
    <source>
        <dbReference type="UniProtKB" id="Q9USK2"/>
    </source>
</evidence>
<evidence type="ECO:0000255" key="3">
    <source>
        <dbReference type="PROSITE-ProRule" id="PRU00190"/>
    </source>
</evidence>
<evidence type="ECO:0000255" key="4">
    <source>
        <dbReference type="PROSITE-ProRule" id="PRU00900"/>
    </source>
</evidence>
<evidence type="ECO:0000256" key="5">
    <source>
        <dbReference type="SAM" id="MobiDB-lite"/>
    </source>
</evidence>
<feature type="chain" id="PRO_0000281801" description="Histone-lysine N-methyltransferase SET9">
    <location>
        <begin position="1"/>
        <end position="734"/>
    </location>
</feature>
<feature type="domain" description="SET" evidence="3">
    <location>
        <begin position="116"/>
        <end position="230"/>
    </location>
</feature>
<feature type="region of interest" description="Disordered" evidence="5">
    <location>
        <begin position="343"/>
        <end position="459"/>
    </location>
</feature>
<feature type="region of interest" description="Disordered" evidence="5">
    <location>
        <begin position="523"/>
        <end position="543"/>
    </location>
</feature>
<feature type="region of interest" description="Disordered" evidence="5">
    <location>
        <begin position="567"/>
        <end position="591"/>
    </location>
</feature>
<feature type="region of interest" description="Disordered" evidence="5">
    <location>
        <begin position="681"/>
        <end position="734"/>
    </location>
</feature>
<feature type="compositionally biased region" description="Basic and acidic residues" evidence="5">
    <location>
        <begin position="407"/>
        <end position="418"/>
    </location>
</feature>
<feature type="compositionally biased region" description="Polar residues" evidence="5">
    <location>
        <begin position="527"/>
        <end position="543"/>
    </location>
</feature>
<feature type="compositionally biased region" description="Basic and acidic residues" evidence="5">
    <location>
        <begin position="578"/>
        <end position="587"/>
    </location>
</feature>
<organism>
    <name type="scientific">Chaetomium globosum (strain ATCC 6205 / CBS 148.51 / DSM 1962 / NBRC 6347 / NRRL 1970)</name>
    <name type="common">Soil fungus</name>
    <dbReference type="NCBI Taxonomy" id="306901"/>
    <lineage>
        <taxon>Eukaryota</taxon>
        <taxon>Fungi</taxon>
        <taxon>Dikarya</taxon>
        <taxon>Ascomycota</taxon>
        <taxon>Pezizomycotina</taxon>
        <taxon>Sordariomycetes</taxon>
        <taxon>Sordariomycetidae</taxon>
        <taxon>Sordariales</taxon>
        <taxon>Chaetomiaceae</taxon>
        <taxon>Chaetomium</taxon>
    </lineage>
</organism>
<proteinExistence type="inferred from homology"/>
<protein>
    <recommendedName>
        <fullName>Histone-lysine N-methyltransferase SET9</fullName>
        <ecNumber evidence="2">2.1.1.372</ecNumber>
    </recommendedName>
    <alternativeName>
        <fullName>SET domain protein 9</fullName>
    </alternativeName>
</protein>
<keyword id="KW-0156">Chromatin regulator</keyword>
<keyword id="KW-0158">Chromosome</keyword>
<keyword id="KW-0489">Methyltransferase</keyword>
<keyword id="KW-0539">Nucleus</keyword>
<keyword id="KW-1185">Reference proteome</keyword>
<keyword id="KW-0949">S-adenosyl-L-methionine</keyword>
<keyword id="KW-0808">Transferase</keyword>
<comment type="function">
    <text evidence="2">Histone methyltransferase that trimethylates 'Lys-20' of histone H4 to form H4K20me3.</text>
</comment>
<comment type="catalytic activity">
    <reaction evidence="2 4">
        <text>L-lysyl(20)-[histone H4] + 3 S-adenosyl-L-methionine = N(6),N(6),N(6)-trimethyl-L-lysyl(20)-[histone H4] + 3 S-adenosyl-L-homocysteine + 3 H(+)</text>
        <dbReference type="Rhea" id="RHEA:64456"/>
        <dbReference type="Rhea" id="RHEA-COMP:15554"/>
        <dbReference type="Rhea" id="RHEA-COMP:15998"/>
        <dbReference type="ChEBI" id="CHEBI:15378"/>
        <dbReference type="ChEBI" id="CHEBI:29969"/>
        <dbReference type="ChEBI" id="CHEBI:57856"/>
        <dbReference type="ChEBI" id="CHEBI:59789"/>
        <dbReference type="ChEBI" id="CHEBI:61961"/>
        <dbReference type="EC" id="2.1.1.372"/>
    </reaction>
</comment>
<comment type="subcellular location">
    <subcellularLocation>
        <location evidence="1">Nucleus</location>
    </subcellularLocation>
    <subcellularLocation>
        <location evidence="1">Chromosome</location>
    </subcellularLocation>
</comment>
<comment type="similarity">
    <text evidence="4">Belongs to the class V-like SAM-binding methyltransferase superfamily. Histone-lysine methyltransferase family. Suvar4-20 subfamily.</text>
</comment>